<dbReference type="EC" id="2.4.2.43" evidence="1"/>
<dbReference type="EMBL" id="CP000826">
    <property type="protein sequence ID" value="ABV41259.1"/>
    <property type="molecule type" value="Genomic_DNA"/>
</dbReference>
<dbReference type="SMR" id="A8GDR9"/>
<dbReference type="STRING" id="399741.Spro_2158"/>
<dbReference type="CAZy" id="GT83">
    <property type="family name" value="Glycosyltransferase Family 83"/>
</dbReference>
<dbReference type="KEGG" id="spe:Spro_2158"/>
<dbReference type="eggNOG" id="COG1807">
    <property type="taxonomic scope" value="Bacteria"/>
</dbReference>
<dbReference type="HOGENOM" id="CLU_019200_2_1_6"/>
<dbReference type="OrthoDB" id="9775035at2"/>
<dbReference type="UniPathway" id="UPA00037"/>
<dbReference type="GO" id="GO:0005886">
    <property type="term" value="C:plasma membrane"/>
    <property type="evidence" value="ECO:0007669"/>
    <property type="project" value="UniProtKB-SubCell"/>
</dbReference>
<dbReference type="GO" id="GO:0103015">
    <property type="term" value="F:4-amino-4-deoxy-L-arabinose transferase activity"/>
    <property type="evidence" value="ECO:0007669"/>
    <property type="project" value="UniProtKB-EC"/>
</dbReference>
<dbReference type="GO" id="GO:0000030">
    <property type="term" value="F:mannosyltransferase activity"/>
    <property type="evidence" value="ECO:0007669"/>
    <property type="project" value="InterPro"/>
</dbReference>
<dbReference type="GO" id="GO:0009245">
    <property type="term" value="P:lipid A biosynthetic process"/>
    <property type="evidence" value="ECO:0007669"/>
    <property type="project" value="UniProtKB-UniRule"/>
</dbReference>
<dbReference type="GO" id="GO:0009103">
    <property type="term" value="P:lipopolysaccharide biosynthetic process"/>
    <property type="evidence" value="ECO:0007669"/>
    <property type="project" value="UniProtKB-KW"/>
</dbReference>
<dbReference type="GO" id="GO:0006493">
    <property type="term" value="P:protein O-linked glycosylation"/>
    <property type="evidence" value="ECO:0007669"/>
    <property type="project" value="InterPro"/>
</dbReference>
<dbReference type="GO" id="GO:0010041">
    <property type="term" value="P:response to iron(III) ion"/>
    <property type="evidence" value="ECO:0007669"/>
    <property type="project" value="TreeGrafter"/>
</dbReference>
<dbReference type="HAMAP" id="MF_01165">
    <property type="entry name" value="ArnT_transfer"/>
    <property type="match status" value="1"/>
</dbReference>
<dbReference type="InterPro" id="IPR022839">
    <property type="entry name" value="ArnT_tfrase"/>
</dbReference>
<dbReference type="InterPro" id="IPR003342">
    <property type="entry name" value="Glyco_trans_39/83"/>
</dbReference>
<dbReference type="InterPro" id="IPR050297">
    <property type="entry name" value="LipidA_mod_glycosyltrf_83"/>
</dbReference>
<dbReference type="NCBIfam" id="NF009784">
    <property type="entry name" value="PRK13279.1"/>
    <property type="match status" value="1"/>
</dbReference>
<dbReference type="PANTHER" id="PTHR33908">
    <property type="entry name" value="MANNOSYLTRANSFERASE YKCB-RELATED"/>
    <property type="match status" value="1"/>
</dbReference>
<dbReference type="PANTHER" id="PTHR33908:SF3">
    <property type="entry name" value="UNDECAPRENYL PHOSPHATE-ALPHA-4-AMINO-4-DEOXY-L-ARABINOSE ARABINOSYL TRANSFERASE"/>
    <property type="match status" value="1"/>
</dbReference>
<dbReference type="Pfam" id="PF02366">
    <property type="entry name" value="PMT"/>
    <property type="match status" value="1"/>
</dbReference>
<proteinExistence type="inferred from homology"/>
<evidence type="ECO:0000255" key="1">
    <source>
        <dbReference type="HAMAP-Rule" id="MF_01165"/>
    </source>
</evidence>
<protein>
    <recommendedName>
        <fullName evidence="1">Undecaprenyl phosphate-alpha-4-amino-4-deoxy-L-arabinose arabinosyl transferase</fullName>
        <ecNumber evidence="1">2.4.2.43</ecNumber>
    </recommendedName>
    <alternativeName>
        <fullName evidence="1">4-amino-4-deoxy-L-arabinose lipid A transferase</fullName>
    </alternativeName>
    <alternativeName>
        <fullName evidence="1">Lipid IV(A) 4-amino-4-deoxy-L-arabinosyltransferase</fullName>
    </alternativeName>
    <alternativeName>
        <fullName evidence="1">Undecaprenyl phosphate-alpha-L-Ara4N transferase</fullName>
    </alternativeName>
</protein>
<keyword id="KW-0997">Cell inner membrane</keyword>
<keyword id="KW-1003">Cell membrane</keyword>
<keyword id="KW-0328">Glycosyltransferase</keyword>
<keyword id="KW-0441">Lipid A biosynthesis</keyword>
<keyword id="KW-0444">Lipid biosynthesis</keyword>
<keyword id="KW-0443">Lipid metabolism</keyword>
<keyword id="KW-0448">Lipopolysaccharide biosynthesis</keyword>
<keyword id="KW-0472">Membrane</keyword>
<keyword id="KW-0808">Transferase</keyword>
<keyword id="KW-0812">Transmembrane</keyword>
<keyword id="KW-1133">Transmembrane helix</keyword>
<sequence length="555" mass="62362">MKALKGSWAILLAIFFALVYLIPLNGRLLWQPDETRYAEISREMLQRGDWVVPHLLGLRYFEKPVAGYWFNNISQWLFGDTNFAVRFGSVFSTGMTALLVFALAMLMWRNARRASLATLIFLSMVLVFSIGTYSVLDPMISLWLAAAMVSYYLTLKATTAKGKLGGYVLLGLACGMGFMTKGFLALAVPVIAVIPIVIQQRRIKDLLIYGPVAIVVAVLLSLPWALAIAQREPDFWNYFFWVEHIQRFAEDNAQHKAPFWYYVPVLMAAVLPWLALLPGSLLKGWRERVQRPELFFLLSWVMMPLIFFSIAKGKLPTYILPCMAPLALLMAAYAEDCVAALRSKVFKVNAVLNGLFGLICILALVVLGSGLLPKVHLFTAQEWPKIVIGIIAFAGWLLFAVVSVRNNAQRWSWAAACPLLLCLLIGYAIPQQVTDSKLPQNFIRVNMAELGHSRYVLTDSVGVAAGLAWELKRSDVLMFNQKGEVSYGLEYPDARSHLISDSDFPQWLAQARKQGDVSLVLQLSRGESIDQQKLPKADKVEVMNRLALFWYQQQP</sequence>
<reference key="1">
    <citation type="submission" date="2007-09" db="EMBL/GenBank/DDBJ databases">
        <title>Complete sequence of chromosome of Serratia proteamaculans 568.</title>
        <authorList>
            <consortium name="US DOE Joint Genome Institute"/>
            <person name="Copeland A."/>
            <person name="Lucas S."/>
            <person name="Lapidus A."/>
            <person name="Barry K."/>
            <person name="Glavina del Rio T."/>
            <person name="Dalin E."/>
            <person name="Tice H."/>
            <person name="Pitluck S."/>
            <person name="Chain P."/>
            <person name="Malfatti S."/>
            <person name="Shin M."/>
            <person name="Vergez L."/>
            <person name="Schmutz J."/>
            <person name="Larimer F."/>
            <person name="Land M."/>
            <person name="Hauser L."/>
            <person name="Kyrpides N."/>
            <person name="Kim E."/>
            <person name="Taghavi S."/>
            <person name="Newman L."/>
            <person name="Vangronsveld J."/>
            <person name="van der Lelie D."/>
            <person name="Richardson P."/>
        </authorList>
    </citation>
    <scope>NUCLEOTIDE SEQUENCE [LARGE SCALE GENOMIC DNA]</scope>
    <source>
        <strain>568</strain>
    </source>
</reference>
<gene>
    <name evidence="1" type="primary">arnT</name>
    <name type="ordered locus">Spro_2158</name>
</gene>
<feature type="chain" id="PRO_1000065667" description="Undecaprenyl phosphate-alpha-4-amino-4-deoxy-L-arabinose arabinosyl transferase">
    <location>
        <begin position="1"/>
        <end position="555"/>
    </location>
</feature>
<feature type="transmembrane region" description="Helical" evidence="1">
    <location>
        <begin position="6"/>
        <end position="26"/>
    </location>
</feature>
<feature type="transmembrane region" description="Helical" evidence="1">
    <location>
        <begin position="87"/>
        <end position="107"/>
    </location>
</feature>
<feature type="transmembrane region" description="Helical" evidence="1">
    <location>
        <begin position="116"/>
        <end position="136"/>
    </location>
</feature>
<feature type="transmembrane region" description="Helical" evidence="1">
    <location>
        <begin position="178"/>
        <end position="198"/>
    </location>
</feature>
<feature type="transmembrane region" description="Helical" evidence="1">
    <location>
        <begin position="206"/>
        <end position="226"/>
    </location>
</feature>
<feature type="transmembrane region" description="Helical" evidence="1">
    <location>
        <begin position="257"/>
        <end position="277"/>
    </location>
</feature>
<feature type="transmembrane region" description="Helical" evidence="1">
    <location>
        <begin position="293"/>
        <end position="313"/>
    </location>
</feature>
<feature type="transmembrane region" description="Helical" evidence="1">
    <location>
        <begin position="315"/>
        <end position="335"/>
    </location>
</feature>
<feature type="transmembrane region" description="Helical" evidence="1">
    <location>
        <begin position="351"/>
        <end position="371"/>
    </location>
</feature>
<feature type="transmembrane region" description="Helical" evidence="1">
    <location>
        <begin position="384"/>
        <end position="404"/>
    </location>
</feature>
<feature type="transmembrane region" description="Helical" evidence="1">
    <location>
        <begin position="411"/>
        <end position="431"/>
    </location>
</feature>
<name>ARNT_SERP5</name>
<organism>
    <name type="scientific">Serratia proteamaculans (strain 568)</name>
    <dbReference type="NCBI Taxonomy" id="399741"/>
    <lineage>
        <taxon>Bacteria</taxon>
        <taxon>Pseudomonadati</taxon>
        <taxon>Pseudomonadota</taxon>
        <taxon>Gammaproteobacteria</taxon>
        <taxon>Enterobacterales</taxon>
        <taxon>Yersiniaceae</taxon>
        <taxon>Serratia</taxon>
    </lineage>
</organism>
<comment type="function">
    <text evidence="1">Catalyzes the transfer of the L-Ara4N moiety of the glycolipid undecaprenyl phosphate-alpha-L-Ara4N to lipid A. The modified arabinose is attached to lipid A and is required for resistance to polymyxin and cationic antimicrobial peptides.</text>
</comment>
<comment type="catalytic activity">
    <reaction evidence="1">
        <text>4-amino-4-deoxy-alpha-L-arabinopyranosyl di-trans,octa-cis-undecaprenyl phosphate + lipid IVA = lipid IIA + di-trans,octa-cis-undecaprenyl phosphate.</text>
        <dbReference type="EC" id="2.4.2.43"/>
    </reaction>
</comment>
<comment type="pathway">
    <text evidence="1">Lipopolysaccharide metabolism; 4-amino-4-deoxy-beta-L-arabinose-lipid A biosynthesis.</text>
</comment>
<comment type="subcellular location">
    <subcellularLocation>
        <location evidence="1">Cell inner membrane</location>
        <topology evidence="1">Multi-pass membrane protein</topology>
    </subcellularLocation>
</comment>
<comment type="similarity">
    <text evidence="1">Belongs to the glycosyltransferase 83 family.</text>
</comment>
<accession>A8GDR9</accession>